<sequence>MQDVATEAAKRRTFAIISHPDAGKTTLTEKLLYYGGAIQMAGSVKGRKSKAHATSDWMAMEQERGISVTSSVMQFPYRERILNLLDTPGHGDFSEDTYRTLTAVDSALMVIDIAKGVEERTVQLMDVCRMRDTPITTFINKLDRDGRDPVEVLDEVESVLRIRCAPVTWPLGMGRGFRGVYHLHLDQVRLFMDREIIQGLDNPRLDELFPGEVDEWREQIELVREASDSFDPEAYLAGQLTPVYFGSAVNDFGIRELLDDFVEHAPAPRSRDAGREVRADEENFTGFVFKIQANMDPQHRDRIAFLRVCSGRFEPGMKLYQVRTGKNMKIPRATTFMASDRSHAETAAPGDIIGIHNHGTIIIGDAFTEGESLHFTGIPDFAPELFRRVVLRDPMRMKALQKGLEQLCEEGATQLFRPLLGSDWIVGAVGTLQFDVAAYRLQKEYGVECTFEGVQVYTARWVSAEDEKALQRFRDRNESALAWDGTGALAYLAPTRANLELTQERWPDIRFLATRDR</sequence>
<keyword id="KW-0963">Cytoplasm</keyword>
<keyword id="KW-0342">GTP-binding</keyword>
<keyword id="KW-0547">Nucleotide-binding</keyword>
<keyword id="KW-0648">Protein biosynthesis</keyword>
<keyword id="KW-1185">Reference proteome</keyword>
<feature type="chain" id="PRO_1000057484" description="Peptide chain release factor 3">
    <location>
        <begin position="1"/>
        <end position="517"/>
    </location>
</feature>
<feature type="domain" description="tr-type G">
    <location>
        <begin position="9"/>
        <end position="269"/>
    </location>
</feature>
<feature type="binding site" evidence="1">
    <location>
        <begin position="18"/>
        <end position="25"/>
    </location>
    <ligand>
        <name>GTP</name>
        <dbReference type="ChEBI" id="CHEBI:37565"/>
    </ligand>
</feature>
<feature type="binding site" evidence="1">
    <location>
        <begin position="86"/>
        <end position="90"/>
    </location>
    <ligand>
        <name>GTP</name>
        <dbReference type="ChEBI" id="CHEBI:37565"/>
    </ligand>
</feature>
<feature type="binding site" evidence="1">
    <location>
        <begin position="140"/>
        <end position="143"/>
    </location>
    <ligand>
        <name>GTP</name>
        <dbReference type="ChEBI" id="CHEBI:37565"/>
    </ligand>
</feature>
<name>RF3_HALHL</name>
<proteinExistence type="inferred from homology"/>
<organism>
    <name type="scientific">Halorhodospira halophila (strain DSM 244 / SL1)</name>
    <name type="common">Ectothiorhodospira halophila (strain DSM 244 / SL1)</name>
    <dbReference type="NCBI Taxonomy" id="349124"/>
    <lineage>
        <taxon>Bacteria</taxon>
        <taxon>Pseudomonadati</taxon>
        <taxon>Pseudomonadota</taxon>
        <taxon>Gammaproteobacteria</taxon>
        <taxon>Chromatiales</taxon>
        <taxon>Ectothiorhodospiraceae</taxon>
        <taxon>Halorhodospira</taxon>
    </lineage>
</organism>
<comment type="function">
    <text evidence="1">Increases the formation of ribosomal termination complexes and stimulates activities of RF-1 and RF-2. It binds guanine nucleotides and has strong preference for UGA stop codons. It may interact directly with the ribosome. The stimulation of RF-1 and RF-2 is significantly reduced by GTP and GDP, but not by GMP.</text>
</comment>
<comment type="subcellular location">
    <subcellularLocation>
        <location evidence="1">Cytoplasm</location>
    </subcellularLocation>
</comment>
<comment type="similarity">
    <text evidence="1">Belongs to the TRAFAC class translation factor GTPase superfamily. Classic translation factor GTPase family. PrfC subfamily.</text>
</comment>
<evidence type="ECO:0000255" key="1">
    <source>
        <dbReference type="HAMAP-Rule" id="MF_00072"/>
    </source>
</evidence>
<gene>
    <name evidence="1" type="primary">prfC</name>
    <name type="ordered locus">Hhal_0015</name>
</gene>
<reference key="1">
    <citation type="submission" date="2006-12" db="EMBL/GenBank/DDBJ databases">
        <title>Complete sequence of Halorhodospira halophila SL1.</title>
        <authorList>
            <consortium name="US DOE Joint Genome Institute"/>
            <person name="Copeland A."/>
            <person name="Lucas S."/>
            <person name="Lapidus A."/>
            <person name="Barry K."/>
            <person name="Detter J.C."/>
            <person name="Glavina del Rio T."/>
            <person name="Hammon N."/>
            <person name="Israni S."/>
            <person name="Dalin E."/>
            <person name="Tice H."/>
            <person name="Pitluck S."/>
            <person name="Saunders E."/>
            <person name="Brettin T."/>
            <person name="Bruce D."/>
            <person name="Han C."/>
            <person name="Tapia R."/>
            <person name="Schmutz J."/>
            <person name="Larimer F."/>
            <person name="Land M."/>
            <person name="Hauser L."/>
            <person name="Kyrpides N."/>
            <person name="Mikhailova N."/>
            <person name="Hoff W."/>
            <person name="Richardson P."/>
        </authorList>
    </citation>
    <scope>NUCLEOTIDE SEQUENCE [LARGE SCALE GENOMIC DNA]</scope>
    <source>
        <strain>DSM 244 / SL1</strain>
    </source>
</reference>
<accession>A1WSZ8</accession>
<dbReference type="EMBL" id="CP000544">
    <property type="protein sequence ID" value="ABM60810.1"/>
    <property type="molecule type" value="Genomic_DNA"/>
</dbReference>
<dbReference type="RefSeq" id="WP_011812833.1">
    <property type="nucleotide sequence ID" value="NC_008789.1"/>
</dbReference>
<dbReference type="SMR" id="A1WSZ8"/>
<dbReference type="STRING" id="349124.Hhal_0015"/>
<dbReference type="KEGG" id="hha:Hhal_0015"/>
<dbReference type="eggNOG" id="COG4108">
    <property type="taxonomic scope" value="Bacteria"/>
</dbReference>
<dbReference type="HOGENOM" id="CLU_002794_2_1_6"/>
<dbReference type="OrthoDB" id="9804431at2"/>
<dbReference type="Proteomes" id="UP000000647">
    <property type="component" value="Chromosome"/>
</dbReference>
<dbReference type="GO" id="GO:0005829">
    <property type="term" value="C:cytosol"/>
    <property type="evidence" value="ECO:0007669"/>
    <property type="project" value="TreeGrafter"/>
</dbReference>
<dbReference type="GO" id="GO:0005525">
    <property type="term" value="F:GTP binding"/>
    <property type="evidence" value="ECO:0007669"/>
    <property type="project" value="UniProtKB-UniRule"/>
</dbReference>
<dbReference type="GO" id="GO:0003924">
    <property type="term" value="F:GTPase activity"/>
    <property type="evidence" value="ECO:0007669"/>
    <property type="project" value="InterPro"/>
</dbReference>
<dbReference type="GO" id="GO:0097216">
    <property type="term" value="F:guanosine tetraphosphate binding"/>
    <property type="evidence" value="ECO:0007669"/>
    <property type="project" value="UniProtKB-ARBA"/>
</dbReference>
<dbReference type="GO" id="GO:0016150">
    <property type="term" value="F:translation release factor activity, codon nonspecific"/>
    <property type="evidence" value="ECO:0007669"/>
    <property type="project" value="TreeGrafter"/>
</dbReference>
<dbReference type="GO" id="GO:0016149">
    <property type="term" value="F:translation release factor activity, codon specific"/>
    <property type="evidence" value="ECO:0007669"/>
    <property type="project" value="UniProtKB-UniRule"/>
</dbReference>
<dbReference type="GO" id="GO:0006449">
    <property type="term" value="P:regulation of translational termination"/>
    <property type="evidence" value="ECO:0007669"/>
    <property type="project" value="UniProtKB-UniRule"/>
</dbReference>
<dbReference type="CDD" id="cd04169">
    <property type="entry name" value="RF3"/>
    <property type="match status" value="1"/>
</dbReference>
<dbReference type="CDD" id="cd16259">
    <property type="entry name" value="RF3_III"/>
    <property type="match status" value="1"/>
</dbReference>
<dbReference type="FunFam" id="3.30.70.3280:FF:000001">
    <property type="entry name" value="Peptide chain release factor 3"/>
    <property type="match status" value="1"/>
</dbReference>
<dbReference type="FunFam" id="3.40.50.300:FF:000542">
    <property type="entry name" value="Peptide chain release factor 3"/>
    <property type="match status" value="1"/>
</dbReference>
<dbReference type="Gene3D" id="3.40.50.300">
    <property type="entry name" value="P-loop containing nucleotide triphosphate hydrolases"/>
    <property type="match status" value="3"/>
</dbReference>
<dbReference type="Gene3D" id="3.30.70.3280">
    <property type="entry name" value="Peptide chain release factor 3, domain III"/>
    <property type="match status" value="1"/>
</dbReference>
<dbReference type="HAMAP" id="MF_00072">
    <property type="entry name" value="Rel_fac_3"/>
    <property type="match status" value="1"/>
</dbReference>
<dbReference type="InterPro" id="IPR053905">
    <property type="entry name" value="EF-G-like_DII"/>
</dbReference>
<dbReference type="InterPro" id="IPR035647">
    <property type="entry name" value="EFG_III/V"/>
</dbReference>
<dbReference type="InterPro" id="IPR031157">
    <property type="entry name" value="G_TR_CS"/>
</dbReference>
<dbReference type="InterPro" id="IPR027417">
    <property type="entry name" value="P-loop_NTPase"/>
</dbReference>
<dbReference type="InterPro" id="IPR004548">
    <property type="entry name" value="PrfC"/>
</dbReference>
<dbReference type="InterPro" id="IPR032090">
    <property type="entry name" value="RF3_C"/>
</dbReference>
<dbReference type="InterPro" id="IPR038467">
    <property type="entry name" value="RF3_dom_3_sf"/>
</dbReference>
<dbReference type="InterPro" id="IPR041732">
    <property type="entry name" value="RF3_GTP-bd"/>
</dbReference>
<dbReference type="InterPro" id="IPR005225">
    <property type="entry name" value="Small_GTP-bd"/>
</dbReference>
<dbReference type="InterPro" id="IPR000795">
    <property type="entry name" value="T_Tr_GTP-bd_dom"/>
</dbReference>
<dbReference type="InterPro" id="IPR009000">
    <property type="entry name" value="Transl_B-barrel_sf"/>
</dbReference>
<dbReference type="NCBIfam" id="TIGR00503">
    <property type="entry name" value="prfC"/>
    <property type="match status" value="1"/>
</dbReference>
<dbReference type="NCBIfam" id="NF001964">
    <property type="entry name" value="PRK00741.1"/>
    <property type="match status" value="1"/>
</dbReference>
<dbReference type="NCBIfam" id="TIGR00231">
    <property type="entry name" value="small_GTP"/>
    <property type="match status" value="1"/>
</dbReference>
<dbReference type="PANTHER" id="PTHR43556">
    <property type="entry name" value="PEPTIDE CHAIN RELEASE FACTOR RF3"/>
    <property type="match status" value="1"/>
</dbReference>
<dbReference type="PANTHER" id="PTHR43556:SF2">
    <property type="entry name" value="PEPTIDE CHAIN RELEASE FACTOR RF3"/>
    <property type="match status" value="1"/>
</dbReference>
<dbReference type="Pfam" id="PF22042">
    <property type="entry name" value="EF-G_D2"/>
    <property type="match status" value="1"/>
</dbReference>
<dbReference type="Pfam" id="PF00009">
    <property type="entry name" value="GTP_EFTU"/>
    <property type="match status" value="1"/>
</dbReference>
<dbReference type="Pfam" id="PF16658">
    <property type="entry name" value="RF3_C"/>
    <property type="match status" value="1"/>
</dbReference>
<dbReference type="PRINTS" id="PR00315">
    <property type="entry name" value="ELONGATNFCT"/>
</dbReference>
<dbReference type="PRINTS" id="PR01037">
    <property type="entry name" value="TCRTETOQM"/>
</dbReference>
<dbReference type="SUPFAM" id="SSF54980">
    <property type="entry name" value="EF-G C-terminal domain-like"/>
    <property type="match status" value="1"/>
</dbReference>
<dbReference type="SUPFAM" id="SSF52540">
    <property type="entry name" value="P-loop containing nucleoside triphosphate hydrolases"/>
    <property type="match status" value="1"/>
</dbReference>
<dbReference type="SUPFAM" id="SSF50447">
    <property type="entry name" value="Translation proteins"/>
    <property type="match status" value="1"/>
</dbReference>
<dbReference type="PROSITE" id="PS00301">
    <property type="entry name" value="G_TR_1"/>
    <property type="match status" value="1"/>
</dbReference>
<dbReference type="PROSITE" id="PS51722">
    <property type="entry name" value="G_TR_2"/>
    <property type="match status" value="1"/>
</dbReference>
<protein>
    <recommendedName>
        <fullName evidence="1">Peptide chain release factor 3</fullName>
        <shortName evidence="1">RF-3</shortName>
    </recommendedName>
</protein>